<name>NHAP2_YERPY</name>
<accession>B1JHF7</accession>
<protein>
    <recommendedName>
        <fullName evidence="1">K(+)/H(+) antiporter NhaP2</fullName>
    </recommendedName>
    <alternativeName>
        <fullName evidence="1">Potassium/proton antiporter NhaP2</fullName>
    </alternativeName>
</protein>
<sequence>MDAITINSLFLVGAVLVAASILLSSFSSRLGIPILVIFLAIGMLAGTDGLGGIAFDNYPAAYLVSNLALAVILLDGGMRTRASSFRVALWPALSLATFGVIITAGLTGLVAAWLFNLDIIQGLLIGAIIGSTDAAAVFSLLGGKGLNERVSATLEIESGSNDPMAVFLTVTLIAMIAAGETSLSWMFLVHLIQQFGLGIIIGLLGGGLLLLLINRMELANGLYPLLAVSGGILVFALATALNGSGILAVYLCGLLLGNRPIRNRAGILQTFDGLAWLSQIGMFLVLGLLLNPSDLLPIAIPALLLSLWMILFARPLSVFIGLLPFRSFNLRERVFISWVGLRGAVPVILAVFPMMAGLPNANLFFNVAFFVVLVSLLLQGTTLSFAARKAKLVVPPTLAPVSRIGLDIDMNNQWEQFIYQLSCDKWCIGATLRDLKMPQGTRIAALFRGKDLLHPTGSTRLKEGDILCVIGQEHDLPALGKLFSQSPNIQLDERFFGDFILDADAKLQDISQIYGLNLEPTVDKQQTLGQFVLYLFGGEPVIGDQIEWDGLTWTIAEMESDRVSRVGVKIVTDKA</sequence>
<comment type="function">
    <text evidence="1">K(+)/H(+) antiporter that extrudes potassium in exchange for external protons and maintains the internal concentration of potassium under toxic levels.</text>
</comment>
<comment type="catalytic activity">
    <reaction evidence="1">
        <text>K(+)(in) + H(+)(out) = K(+)(out) + H(+)(in)</text>
        <dbReference type="Rhea" id="RHEA:29467"/>
        <dbReference type="ChEBI" id="CHEBI:15378"/>
        <dbReference type="ChEBI" id="CHEBI:29103"/>
    </reaction>
    <physiologicalReaction direction="left-to-right" evidence="1">
        <dbReference type="Rhea" id="RHEA:29468"/>
    </physiologicalReaction>
</comment>
<comment type="subcellular location">
    <subcellularLocation>
        <location evidence="1">Cell inner membrane</location>
        <topology evidence="1">Multi-pass membrane protein</topology>
    </subcellularLocation>
</comment>
<comment type="similarity">
    <text evidence="1">Belongs to the monovalent cation:proton antiporter 1 (CPA1) transporter (TC 2.A.36) family. NhaP2 subfamily.</text>
</comment>
<reference key="1">
    <citation type="submission" date="2008-02" db="EMBL/GenBank/DDBJ databases">
        <title>Complete sequence of Yersinia pseudotuberculosis YPIII.</title>
        <authorList>
            <consortium name="US DOE Joint Genome Institute"/>
            <person name="Copeland A."/>
            <person name="Lucas S."/>
            <person name="Lapidus A."/>
            <person name="Glavina del Rio T."/>
            <person name="Dalin E."/>
            <person name="Tice H."/>
            <person name="Bruce D."/>
            <person name="Goodwin L."/>
            <person name="Pitluck S."/>
            <person name="Munk A.C."/>
            <person name="Brettin T."/>
            <person name="Detter J.C."/>
            <person name="Han C."/>
            <person name="Tapia R."/>
            <person name="Schmutz J."/>
            <person name="Larimer F."/>
            <person name="Land M."/>
            <person name="Hauser L."/>
            <person name="Challacombe J.F."/>
            <person name="Green L."/>
            <person name="Lindler L.E."/>
            <person name="Nikolich M.P."/>
            <person name="Richardson P."/>
        </authorList>
    </citation>
    <scope>NUCLEOTIDE SEQUENCE [LARGE SCALE GENOMIC DNA]</scope>
    <source>
        <strain>YPIII</strain>
    </source>
</reference>
<gene>
    <name evidence="1" type="primary">nhaP2</name>
    <name type="synonym">cvrA</name>
    <name type="ordered locus">YPK_1658</name>
</gene>
<dbReference type="EMBL" id="CP000950">
    <property type="protein sequence ID" value="ACA67951.1"/>
    <property type="molecule type" value="Genomic_DNA"/>
</dbReference>
<dbReference type="RefSeq" id="WP_011192618.1">
    <property type="nucleotide sequence ID" value="NZ_CP009792.1"/>
</dbReference>
<dbReference type="SMR" id="B1JHF7"/>
<dbReference type="KEGG" id="ypy:YPK_1658"/>
<dbReference type="PATRIC" id="fig|502800.11.peg.2316"/>
<dbReference type="GO" id="GO:0005886">
    <property type="term" value="C:plasma membrane"/>
    <property type="evidence" value="ECO:0007669"/>
    <property type="project" value="UniProtKB-SubCell"/>
</dbReference>
<dbReference type="GO" id="GO:0050660">
    <property type="term" value="F:flavin adenine dinucleotide binding"/>
    <property type="evidence" value="ECO:0007669"/>
    <property type="project" value="InterPro"/>
</dbReference>
<dbReference type="GO" id="GO:0015386">
    <property type="term" value="F:potassium:proton antiporter activity"/>
    <property type="evidence" value="ECO:0007669"/>
    <property type="project" value="UniProtKB-UniRule"/>
</dbReference>
<dbReference type="GO" id="GO:0006884">
    <property type="term" value="P:cell volume homeostasis"/>
    <property type="evidence" value="ECO:0007669"/>
    <property type="project" value="InterPro"/>
</dbReference>
<dbReference type="Gene3D" id="1.20.1530.20">
    <property type="match status" value="1"/>
</dbReference>
<dbReference type="Gene3D" id="3.30.465.10">
    <property type="match status" value="1"/>
</dbReference>
<dbReference type="Gene3D" id="3.30.70.1450">
    <property type="entry name" value="Regulator of K+ conductance, C-terminal domain"/>
    <property type="match status" value="1"/>
</dbReference>
<dbReference type="HAMAP" id="MF_01075">
    <property type="entry name" value="NhaP2"/>
    <property type="match status" value="1"/>
</dbReference>
<dbReference type="InterPro" id="IPR006153">
    <property type="entry name" value="Cation/H_exchanger_TM"/>
</dbReference>
<dbReference type="InterPro" id="IPR036318">
    <property type="entry name" value="FAD-bd_PCMH-like_sf"/>
</dbReference>
<dbReference type="InterPro" id="IPR016169">
    <property type="entry name" value="FAD-bd_PCMH_sub2"/>
</dbReference>
<dbReference type="InterPro" id="IPR038770">
    <property type="entry name" value="Na+/solute_symporter_sf"/>
</dbReference>
<dbReference type="InterPro" id="IPR023729">
    <property type="entry name" value="NhaP2"/>
</dbReference>
<dbReference type="InterPro" id="IPR006037">
    <property type="entry name" value="RCK_C"/>
</dbReference>
<dbReference type="InterPro" id="IPR036721">
    <property type="entry name" value="RCK_C_sf"/>
</dbReference>
<dbReference type="InterPro" id="IPR005170">
    <property type="entry name" value="Transptr-assoc_dom"/>
</dbReference>
<dbReference type="NCBIfam" id="NF003714">
    <property type="entry name" value="PRK05326.1-1"/>
    <property type="match status" value="1"/>
</dbReference>
<dbReference type="NCBIfam" id="NF003715">
    <property type="entry name" value="PRK05326.1-2"/>
    <property type="match status" value="1"/>
</dbReference>
<dbReference type="NCBIfam" id="NF003716">
    <property type="entry name" value="PRK05326.1-3"/>
    <property type="match status" value="1"/>
</dbReference>
<dbReference type="PANTHER" id="PTHR32507:SF7">
    <property type="entry name" value="K(+)_H(+) ANTIPORTER NHAP2"/>
    <property type="match status" value="1"/>
</dbReference>
<dbReference type="PANTHER" id="PTHR32507">
    <property type="entry name" value="NA(+)/H(+) ANTIPORTER 1"/>
    <property type="match status" value="1"/>
</dbReference>
<dbReference type="Pfam" id="PF03471">
    <property type="entry name" value="CorC_HlyC"/>
    <property type="match status" value="1"/>
</dbReference>
<dbReference type="Pfam" id="PF00999">
    <property type="entry name" value="Na_H_Exchanger"/>
    <property type="match status" value="1"/>
</dbReference>
<dbReference type="Pfam" id="PF02080">
    <property type="entry name" value="TrkA_C"/>
    <property type="match status" value="1"/>
</dbReference>
<dbReference type="SMART" id="SM01091">
    <property type="entry name" value="CorC_HlyC"/>
    <property type="match status" value="1"/>
</dbReference>
<dbReference type="SUPFAM" id="SSF56176">
    <property type="entry name" value="FAD-binding/transporter-associated domain-like"/>
    <property type="match status" value="1"/>
</dbReference>
<dbReference type="SUPFAM" id="SSF116726">
    <property type="entry name" value="TrkA C-terminal domain-like"/>
    <property type="match status" value="1"/>
</dbReference>
<dbReference type="PROSITE" id="PS51202">
    <property type="entry name" value="RCK_C"/>
    <property type="match status" value="1"/>
</dbReference>
<keyword id="KW-0050">Antiport</keyword>
<keyword id="KW-0997">Cell inner membrane</keyword>
<keyword id="KW-1003">Cell membrane</keyword>
<keyword id="KW-0406">Ion transport</keyword>
<keyword id="KW-0472">Membrane</keyword>
<keyword id="KW-0630">Potassium</keyword>
<keyword id="KW-0633">Potassium transport</keyword>
<keyword id="KW-0812">Transmembrane</keyword>
<keyword id="KW-1133">Transmembrane helix</keyword>
<keyword id="KW-0813">Transport</keyword>
<feature type="chain" id="PRO_1000136719" description="K(+)/H(+) antiporter NhaP2">
    <location>
        <begin position="1"/>
        <end position="575"/>
    </location>
</feature>
<feature type="transmembrane region" description="Helical" evidence="1">
    <location>
        <begin position="3"/>
        <end position="23"/>
    </location>
</feature>
<feature type="transmembrane region" description="Helical" evidence="1">
    <location>
        <begin position="30"/>
        <end position="50"/>
    </location>
</feature>
<feature type="transmembrane region" description="Helical" evidence="1">
    <location>
        <begin position="58"/>
        <end position="78"/>
    </location>
</feature>
<feature type="transmembrane region" description="Helical" evidence="1">
    <location>
        <begin position="95"/>
        <end position="115"/>
    </location>
</feature>
<feature type="transmembrane region" description="Helical" evidence="1">
    <location>
        <begin position="122"/>
        <end position="142"/>
    </location>
</feature>
<feature type="transmembrane region" description="Helical" evidence="1">
    <location>
        <begin position="172"/>
        <end position="192"/>
    </location>
</feature>
<feature type="transmembrane region" description="Helical" evidence="1">
    <location>
        <begin position="194"/>
        <end position="214"/>
    </location>
</feature>
<feature type="transmembrane region" description="Helical" evidence="1">
    <location>
        <begin position="221"/>
        <end position="241"/>
    </location>
</feature>
<feature type="transmembrane region" description="Helical" evidence="1">
    <location>
        <begin position="244"/>
        <end position="261"/>
    </location>
</feature>
<feature type="transmembrane region" description="Helical" evidence="1">
    <location>
        <begin position="270"/>
        <end position="290"/>
    </location>
</feature>
<feature type="transmembrane region" description="Helical" evidence="1">
    <location>
        <begin position="293"/>
        <end position="313"/>
    </location>
</feature>
<feature type="transmembrane region" description="Helical" evidence="1">
    <location>
        <begin position="334"/>
        <end position="354"/>
    </location>
</feature>
<feature type="transmembrane region" description="Helical" evidence="1">
    <location>
        <begin position="363"/>
        <end position="383"/>
    </location>
</feature>
<feature type="domain" description="RCK C-terminal" evidence="1">
    <location>
        <begin position="403"/>
        <end position="485"/>
    </location>
</feature>
<organism>
    <name type="scientific">Yersinia pseudotuberculosis serotype O:3 (strain YPIII)</name>
    <dbReference type="NCBI Taxonomy" id="502800"/>
    <lineage>
        <taxon>Bacteria</taxon>
        <taxon>Pseudomonadati</taxon>
        <taxon>Pseudomonadota</taxon>
        <taxon>Gammaproteobacteria</taxon>
        <taxon>Enterobacterales</taxon>
        <taxon>Yersiniaceae</taxon>
        <taxon>Yersinia</taxon>
    </lineage>
</organism>
<evidence type="ECO:0000255" key="1">
    <source>
        <dbReference type="HAMAP-Rule" id="MF_01075"/>
    </source>
</evidence>
<proteinExistence type="inferred from homology"/>